<feature type="chain" id="PRO_1000072899" description="Transcriptional regulator MraZ">
    <location>
        <begin position="1"/>
        <end position="157"/>
    </location>
</feature>
<feature type="domain" description="SpoVT-AbrB 1" evidence="2">
    <location>
        <begin position="7"/>
        <end position="54"/>
    </location>
</feature>
<feature type="domain" description="SpoVT-AbrB 2" evidence="2">
    <location>
        <begin position="83"/>
        <end position="126"/>
    </location>
</feature>
<sequence>MDRFVSTYTMRLDAKGRVSIPAPYRTVLAKDGTDLLHCHPSLAEPALDAGGTSLMAEIEALIARYPPYSEAREELAAALYGTTEMLRIDPEGRVVLTESLKTHAAIADQVTFVGLGHKFRIWEPERFRAHLAEAREKVRQLRRSLGSGSGNEGSISG</sequence>
<accession>A8HZ71</accession>
<evidence type="ECO:0000255" key="1">
    <source>
        <dbReference type="HAMAP-Rule" id="MF_01008"/>
    </source>
</evidence>
<evidence type="ECO:0000255" key="2">
    <source>
        <dbReference type="PROSITE-ProRule" id="PRU01076"/>
    </source>
</evidence>
<gene>
    <name evidence="1" type="primary">mraZ</name>
    <name type="ordered locus">AZC_4547</name>
</gene>
<organism>
    <name type="scientific">Azorhizobium caulinodans (strain ATCC 43989 / DSM 5975 / JCM 20966 / LMG 6465 / NBRC 14845 / NCIMB 13405 / ORS 571)</name>
    <dbReference type="NCBI Taxonomy" id="438753"/>
    <lineage>
        <taxon>Bacteria</taxon>
        <taxon>Pseudomonadati</taxon>
        <taxon>Pseudomonadota</taxon>
        <taxon>Alphaproteobacteria</taxon>
        <taxon>Hyphomicrobiales</taxon>
        <taxon>Xanthobacteraceae</taxon>
        <taxon>Azorhizobium</taxon>
    </lineage>
</organism>
<keyword id="KW-0963">Cytoplasm</keyword>
<keyword id="KW-0238">DNA-binding</keyword>
<keyword id="KW-1185">Reference proteome</keyword>
<keyword id="KW-0677">Repeat</keyword>
<keyword id="KW-0804">Transcription</keyword>
<keyword id="KW-0805">Transcription regulation</keyword>
<reference key="1">
    <citation type="submission" date="2007-04" db="EMBL/GenBank/DDBJ databases">
        <title>Complete genome sequence of the nitrogen-fixing bacterium Azorhizobium caulinodans ORS571.</title>
        <authorList>
            <person name="Lee K.B."/>
            <person name="Backer P.D."/>
            <person name="Aono T."/>
            <person name="Liu C.T."/>
            <person name="Suzuki S."/>
            <person name="Suzuki T."/>
            <person name="Kaneko T."/>
            <person name="Yamada M."/>
            <person name="Tabata S."/>
            <person name="Kupfer D.M."/>
            <person name="Najar F.Z."/>
            <person name="Wiley G.B."/>
            <person name="Roe B."/>
            <person name="Binnewies T."/>
            <person name="Ussery D."/>
            <person name="Vereecke D."/>
            <person name="Gevers D."/>
            <person name="Holsters M."/>
            <person name="Oyaizu H."/>
        </authorList>
    </citation>
    <scope>NUCLEOTIDE SEQUENCE [LARGE SCALE GENOMIC DNA]</scope>
    <source>
        <strain>ATCC 43989 / DSM 5975 / JCM 20966 / LMG 6465 / NBRC 14845 / NCIMB 13405 / ORS 571</strain>
    </source>
</reference>
<comment type="subunit">
    <text evidence="1">Forms oligomers.</text>
</comment>
<comment type="subcellular location">
    <subcellularLocation>
        <location evidence="1">Cytoplasm</location>
        <location evidence="1">Nucleoid</location>
    </subcellularLocation>
</comment>
<comment type="similarity">
    <text evidence="1">Belongs to the MraZ family.</text>
</comment>
<proteinExistence type="inferred from homology"/>
<protein>
    <recommendedName>
        <fullName>Transcriptional regulator MraZ</fullName>
    </recommendedName>
</protein>
<dbReference type="EMBL" id="AP009384">
    <property type="protein sequence ID" value="BAF90545.1"/>
    <property type="molecule type" value="Genomic_DNA"/>
</dbReference>
<dbReference type="RefSeq" id="WP_012173066.1">
    <property type="nucleotide sequence ID" value="NC_009937.1"/>
</dbReference>
<dbReference type="SMR" id="A8HZ71"/>
<dbReference type="STRING" id="438753.AZC_4547"/>
<dbReference type="KEGG" id="azc:AZC_4547"/>
<dbReference type="eggNOG" id="COG2001">
    <property type="taxonomic scope" value="Bacteria"/>
</dbReference>
<dbReference type="HOGENOM" id="CLU_107907_1_0_5"/>
<dbReference type="Proteomes" id="UP000000270">
    <property type="component" value="Chromosome"/>
</dbReference>
<dbReference type="GO" id="GO:0005737">
    <property type="term" value="C:cytoplasm"/>
    <property type="evidence" value="ECO:0007669"/>
    <property type="project" value="UniProtKB-UniRule"/>
</dbReference>
<dbReference type="GO" id="GO:0009295">
    <property type="term" value="C:nucleoid"/>
    <property type="evidence" value="ECO:0007669"/>
    <property type="project" value="UniProtKB-SubCell"/>
</dbReference>
<dbReference type="GO" id="GO:0003700">
    <property type="term" value="F:DNA-binding transcription factor activity"/>
    <property type="evidence" value="ECO:0007669"/>
    <property type="project" value="UniProtKB-UniRule"/>
</dbReference>
<dbReference type="GO" id="GO:0000976">
    <property type="term" value="F:transcription cis-regulatory region binding"/>
    <property type="evidence" value="ECO:0007669"/>
    <property type="project" value="TreeGrafter"/>
</dbReference>
<dbReference type="GO" id="GO:2000143">
    <property type="term" value="P:negative regulation of DNA-templated transcription initiation"/>
    <property type="evidence" value="ECO:0007669"/>
    <property type="project" value="TreeGrafter"/>
</dbReference>
<dbReference type="CDD" id="cd16321">
    <property type="entry name" value="MraZ_C"/>
    <property type="match status" value="1"/>
</dbReference>
<dbReference type="CDD" id="cd16320">
    <property type="entry name" value="MraZ_N"/>
    <property type="match status" value="1"/>
</dbReference>
<dbReference type="Gene3D" id="3.40.1550.20">
    <property type="entry name" value="Transcriptional regulator MraZ domain"/>
    <property type="match status" value="1"/>
</dbReference>
<dbReference type="HAMAP" id="MF_01008">
    <property type="entry name" value="MraZ"/>
    <property type="match status" value="1"/>
</dbReference>
<dbReference type="InterPro" id="IPR003444">
    <property type="entry name" value="MraZ"/>
</dbReference>
<dbReference type="InterPro" id="IPR035644">
    <property type="entry name" value="MraZ_C"/>
</dbReference>
<dbReference type="InterPro" id="IPR020603">
    <property type="entry name" value="MraZ_dom"/>
</dbReference>
<dbReference type="InterPro" id="IPR035642">
    <property type="entry name" value="MraZ_N"/>
</dbReference>
<dbReference type="InterPro" id="IPR038619">
    <property type="entry name" value="MraZ_sf"/>
</dbReference>
<dbReference type="InterPro" id="IPR007159">
    <property type="entry name" value="SpoVT-AbrB_dom"/>
</dbReference>
<dbReference type="InterPro" id="IPR037914">
    <property type="entry name" value="SpoVT-AbrB_sf"/>
</dbReference>
<dbReference type="PANTHER" id="PTHR34701">
    <property type="entry name" value="TRANSCRIPTIONAL REGULATOR MRAZ"/>
    <property type="match status" value="1"/>
</dbReference>
<dbReference type="PANTHER" id="PTHR34701:SF1">
    <property type="entry name" value="TRANSCRIPTIONAL REGULATOR MRAZ"/>
    <property type="match status" value="1"/>
</dbReference>
<dbReference type="Pfam" id="PF02381">
    <property type="entry name" value="MraZ"/>
    <property type="match status" value="1"/>
</dbReference>
<dbReference type="SUPFAM" id="SSF89447">
    <property type="entry name" value="AbrB/MazE/MraZ-like"/>
    <property type="match status" value="1"/>
</dbReference>
<dbReference type="PROSITE" id="PS51740">
    <property type="entry name" value="SPOVT_ABRB"/>
    <property type="match status" value="2"/>
</dbReference>
<name>MRAZ_AZOC5</name>